<dbReference type="EMBL" id="BC114777">
    <property type="protein sequence ID" value="AAI14778.1"/>
    <property type="molecule type" value="mRNA"/>
</dbReference>
<dbReference type="RefSeq" id="NP_001039992.1">
    <property type="nucleotide sequence ID" value="NM_001046527.2"/>
</dbReference>
<dbReference type="RefSeq" id="XP_005214889.1">
    <property type="nucleotide sequence ID" value="XM_005214832.4"/>
</dbReference>
<dbReference type="FunCoup" id="Q1RMQ3">
    <property type="interactions" value="3304"/>
</dbReference>
<dbReference type="STRING" id="9913.ENSBTAP00000006825"/>
<dbReference type="PaxDb" id="9913-ENSBTAP00000006825"/>
<dbReference type="Ensembl" id="ENSBTAT00000006825.4">
    <property type="protein sequence ID" value="ENSBTAP00000006825.3"/>
    <property type="gene ID" value="ENSBTAG00000005181.5"/>
</dbReference>
<dbReference type="GeneID" id="614236"/>
<dbReference type="KEGG" id="bta:614236"/>
<dbReference type="CTD" id="90196"/>
<dbReference type="VEuPathDB" id="HostDB:ENSBTAG00000005181"/>
<dbReference type="VGNC" id="VGNC:97315">
    <property type="gene designation" value="SYS1"/>
</dbReference>
<dbReference type="eggNOG" id="KOG4697">
    <property type="taxonomic scope" value="Eukaryota"/>
</dbReference>
<dbReference type="GeneTree" id="ENSGT00940000154347"/>
<dbReference type="HOGENOM" id="CLU_081382_2_1_1"/>
<dbReference type="InParanoid" id="Q1RMQ3"/>
<dbReference type="OMA" id="EYEMVGM"/>
<dbReference type="OrthoDB" id="542931at2759"/>
<dbReference type="TreeFam" id="TF105875"/>
<dbReference type="Reactome" id="R-BTA-6811440">
    <property type="pathway name" value="Retrograde transport at the Trans-Golgi-Network"/>
</dbReference>
<dbReference type="Proteomes" id="UP000009136">
    <property type="component" value="Chromosome 13"/>
</dbReference>
<dbReference type="Bgee" id="ENSBTAG00000005181">
    <property type="expression patterns" value="Expressed in retina and 106 other cell types or tissues"/>
</dbReference>
<dbReference type="GO" id="GO:0005829">
    <property type="term" value="C:cytosol"/>
    <property type="evidence" value="ECO:0007669"/>
    <property type="project" value="GOC"/>
</dbReference>
<dbReference type="GO" id="GO:0000139">
    <property type="term" value="C:Golgi membrane"/>
    <property type="evidence" value="ECO:0000318"/>
    <property type="project" value="GO_Central"/>
</dbReference>
<dbReference type="GO" id="GO:0005802">
    <property type="term" value="C:trans-Golgi network"/>
    <property type="evidence" value="ECO:0000318"/>
    <property type="project" value="GO_Central"/>
</dbReference>
<dbReference type="GO" id="GO:0006895">
    <property type="term" value="P:Golgi to endosome transport"/>
    <property type="evidence" value="ECO:0000318"/>
    <property type="project" value="GO_Central"/>
</dbReference>
<dbReference type="GO" id="GO:0043001">
    <property type="term" value="P:Golgi to plasma membrane protein transport"/>
    <property type="evidence" value="ECO:0000318"/>
    <property type="project" value="GO_Central"/>
</dbReference>
<dbReference type="GO" id="GO:0034067">
    <property type="term" value="P:protein localization to Golgi apparatus"/>
    <property type="evidence" value="ECO:0000318"/>
    <property type="project" value="GO_Central"/>
</dbReference>
<dbReference type="InterPro" id="IPR016973">
    <property type="entry name" value="Integral_membrane_SYS1"/>
</dbReference>
<dbReference type="InterPro" id="IPR019185">
    <property type="entry name" value="Integral_membrane_SYS1-rel"/>
</dbReference>
<dbReference type="PANTHER" id="PTHR12952:SF0">
    <property type="entry name" value="PROTEIN SYS1 HOMOLOG"/>
    <property type="match status" value="1"/>
</dbReference>
<dbReference type="PANTHER" id="PTHR12952">
    <property type="entry name" value="SYS1"/>
    <property type="match status" value="1"/>
</dbReference>
<dbReference type="Pfam" id="PF09801">
    <property type="entry name" value="SYS1"/>
    <property type="match status" value="1"/>
</dbReference>
<dbReference type="PIRSF" id="PIRSF031402">
    <property type="entry name" value="SYS1_homologue"/>
    <property type="match status" value="1"/>
</dbReference>
<protein>
    <recommendedName>
        <fullName>Protein SYS1 homolog</fullName>
    </recommendedName>
</protein>
<organism>
    <name type="scientific">Bos taurus</name>
    <name type="common">Bovine</name>
    <dbReference type="NCBI Taxonomy" id="9913"/>
    <lineage>
        <taxon>Eukaryota</taxon>
        <taxon>Metazoa</taxon>
        <taxon>Chordata</taxon>
        <taxon>Craniata</taxon>
        <taxon>Vertebrata</taxon>
        <taxon>Euteleostomi</taxon>
        <taxon>Mammalia</taxon>
        <taxon>Eutheria</taxon>
        <taxon>Laurasiatheria</taxon>
        <taxon>Artiodactyla</taxon>
        <taxon>Ruminantia</taxon>
        <taxon>Pecora</taxon>
        <taxon>Bovidae</taxon>
        <taxon>Bovinae</taxon>
        <taxon>Bos</taxon>
    </lineage>
</organism>
<reference key="1">
    <citation type="submission" date="2006-04" db="EMBL/GenBank/DDBJ databases">
        <authorList>
            <consortium name="NIH - Mammalian Gene Collection (MGC) project"/>
        </authorList>
    </citation>
    <scope>NUCLEOTIDE SEQUENCE [LARGE SCALE MRNA]</scope>
    <source>
        <strain>Hereford</strain>
        <tissue>Heart ventricle</tissue>
    </source>
</reference>
<sequence>MAGQFRSYVWDPLLILSQIVLMQTVYYGSLGLWLALVDGLVHSSPSLDQVFDAEILGFSTPPGRLSTMSFVLNALTCALGLLYFIRRGKQCLDFTVTVHFFHLLGCWLYSSRFPSALTWWLVQAVCIALMAVIGEYLCMRSELKEIPLNSAPKSSV</sequence>
<accession>Q1RMQ3</accession>
<proteinExistence type="evidence at transcript level"/>
<name>SYS1_BOVIN</name>
<evidence type="ECO:0000250" key="1"/>
<evidence type="ECO:0000255" key="2"/>
<evidence type="ECO:0000305" key="3"/>
<keyword id="KW-0333">Golgi apparatus</keyword>
<keyword id="KW-0472">Membrane</keyword>
<keyword id="KW-0653">Protein transport</keyword>
<keyword id="KW-1185">Reference proteome</keyword>
<keyword id="KW-0812">Transmembrane</keyword>
<keyword id="KW-1133">Transmembrane helix</keyword>
<keyword id="KW-0813">Transport</keyword>
<comment type="function">
    <text evidence="1">Involved in protein trafficking. May serve as a receptor for ARFRP1 (By similarity).</text>
</comment>
<comment type="subunit">
    <text evidence="1">Interacts with ARFRP1.</text>
</comment>
<comment type="subcellular location">
    <subcellularLocation>
        <location evidence="1">Golgi apparatus membrane</location>
        <topology evidence="1">Multi-pass membrane protein</topology>
    </subcellularLocation>
</comment>
<comment type="similarity">
    <text evidence="3">Belongs to the SYS1 family.</text>
</comment>
<feature type="chain" id="PRO_0000329299" description="Protein SYS1 homolog">
    <location>
        <begin position="1"/>
        <end position="156"/>
    </location>
</feature>
<feature type="transmembrane region" description="Helical" evidence="2">
    <location>
        <begin position="13"/>
        <end position="33"/>
    </location>
</feature>
<feature type="transmembrane region" description="Helical" evidence="2">
    <location>
        <begin position="65"/>
        <end position="85"/>
    </location>
</feature>
<feature type="transmembrane region" description="Helical" evidence="2">
    <location>
        <begin position="91"/>
        <end position="111"/>
    </location>
</feature>
<feature type="transmembrane region" description="Helical" evidence="2">
    <location>
        <begin position="113"/>
        <end position="133"/>
    </location>
</feature>
<gene>
    <name type="primary">SYS1</name>
</gene>